<proteinExistence type="inferred from homology"/>
<comment type="function">
    <text evidence="1">Catalyzes the pyruvoyl-dependent decarboxylation of aspartate to produce beta-alanine.</text>
</comment>
<comment type="catalytic activity">
    <reaction evidence="1">
        <text>L-aspartate + H(+) = beta-alanine + CO2</text>
        <dbReference type="Rhea" id="RHEA:19497"/>
        <dbReference type="ChEBI" id="CHEBI:15378"/>
        <dbReference type="ChEBI" id="CHEBI:16526"/>
        <dbReference type="ChEBI" id="CHEBI:29991"/>
        <dbReference type="ChEBI" id="CHEBI:57966"/>
        <dbReference type="EC" id="4.1.1.11"/>
    </reaction>
</comment>
<comment type="cofactor">
    <cofactor evidence="1">
        <name>pyruvate</name>
        <dbReference type="ChEBI" id="CHEBI:15361"/>
    </cofactor>
    <text evidence="1">Binds 1 pyruvoyl group covalently per subunit.</text>
</comment>
<comment type="pathway">
    <text evidence="1">Cofactor biosynthesis; (R)-pantothenate biosynthesis; beta-alanine from L-aspartate: step 1/1.</text>
</comment>
<comment type="subunit">
    <text evidence="1">Heterooctamer of four alpha and four beta subunits.</text>
</comment>
<comment type="subcellular location">
    <subcellularLocation>
        <location evidence="1">Cytoplasm</location>
    </subcellularLocation>
</comment>
<comment type="PTM">
    <text evidence="1">Is synthesized initially as an inactive proenzyme, which is activated by self-cleavage at a specific serine bond to produce a beta-subunit with a hydroxyl group at its C-terminus and an alpha-subunit with a pyruvoyl group at its N-terminus.</text>
</comment>
<comment type="similarity">
    <text evidence="1">Belongs to the PanD family.</text>
</comment>
<keyword id="KW-0068">Autocatalytic cleavage</keyword>
<keyword id="KW-0963">Cytoplasm</keyword>
<keyword id="KW-0210">Decarboxylase</keyword>
<keyword id="KW-0456">Lyase</keyword>
<keyword id="KW-0566">Pantothenate biosynthesis</keyword>
<keyword id="KW-0670">Pyruvate</keyword>
<keyword id="KW-0704">Schiff base</keyword>
<keyword id="KW-0865">Zymogen</keyword>
<protein>
    <recommendedName>
        <fullName evidence="1">Aspartate 1-decarboxylase</fullName>
        <ecNumber evidence="1">4.1.1.11</ecNumber>
    </recommendedName>
    <alternativeName>
        <fullName evidence="1">Aspartate alpha-decarboxylase</fullName>
    </alternativeName>
    <component>
        <recommendedName>
            <fullName evidence="1">Aspartate 1-decarboxylase beta chain</fullName>
        </recommendedName>
    </component>
    <component>
        <recommendedName>
            <fullName evidence="1">Aspartate 1-decarboxylase alpha chain</fullName>
        </recommendedName>
    </component>
</protein>
<feature type="chain" id="PRO_1000192009" description="Aspartate 1-decarboxylase beta chain" evidence="1">
    <location>
        <begin position="1"/>
        <end position="24"/>
    </location>
</feature>
<feature type="chain" id="PRO_1000192010" description="Aspartate 1-decarboxylase alpha chain" evidence="1">
    <location>
        <begin position="25"/>
        <end position="127"/>
    </location>
</feature>
<feature type="active site" description="Schiff-base intermediate with substrate; via pyruvic acid" evidence="1">
    <location>
        <position position="25"/>
    </location>
</feature>
<feature type="active site" description="Proton donor" evidence="1">
    <location>
        <position position="58"/>
    </location>
</feature>
<feature type="binding site" evidence="1">
    <location>
        <position position="57"/>
    </location>
    <ligand>
        <name>substrate</name>
    </ligand>
</feature>
<feature type="binding site" evidence="1">
    <location>
        <begin position="73"/>
        <end position="75"/>
    </location>
    <ligand>
        <name>substrate</name>
    </ligand>
</feature>
<feature type="modified residue" description="Pyruvic acid (Ser)" evidence="1">
    <location>
        <position position="25"/>
    </location>
</feature>
<accession>B8DC26</accession>
<name>PAND_LISMH</name>
<evidence type="ECO:0000255" key="1">
    <source>
        <dbReference type="HAMAP-Rule" id="MF_00446"/>
    </source>
</evidence>
<sequence>MFRTMMNGKIHRATVTEANLNYVGSITIDSAILEAVDMLPNEKVQIVNNNNGARIETYIIPGEPGSGVICLNGAAARHVQVGDVVIIMSYGMFTAEEAKTHEPKIVVLDEKNHIEMILPEEKAHTTL</sequence>
<dbReference type="EC" id="4.1.1.11" evidence="1"/>
<dbReference type="EMBL" id="CP001175">
    <property type="protein sequence ID" value="ACK39012.1"/>
    <property type="molecule type" value="Genomic_DNA"/>
</dbReference>
<dbReference type="RefSeq" id="WP_003728013.1">
    <property type="nucleotide sequence ID" value="NC_011660.1"/>
</dbReference>
<dbReference type="SMR" id="B8DC26"/>
<dbReference type="GeneID" id="87011001"/>
<dbReference type="KEGG" id="lmh:LMHCC_0657"/>
<dbReference type="HOGENOM" id="CLU_115305_2_0_9"/>
<dbReference type="UniPathway" id="UPA00028">
    <property type="reaction ID" value="UER00002"/>
</dbReference>
<dbReference type="GO" id="GO:0005829">
    <property type="term" value="C:cytosol"/>
    <property type="evidence" value="ECO:0007669"/>
    <property type="project" value="TreeGrafter"/>
</dbReference>
<dbReference type="GO" id="GO:0004068">
    <property type="term" value="F:aspartate 1-decarboxylase activity"/>
    <property type="evidence" value="ECO:0007669"/>
    <property type="project" value="UniProtKB-UniRule"/>
</dbReference>
<dbReference type="GO" id="GO:0006523">
    <property type="term" value="P:alanine biosynthetic process"/>
    <property type="evidence" value="ECO:0007669"/>
    <property type="project" value="InterPro"/>
</dbReference>
<dbReference type="GO" id="GO:0015940">
    <property type="term" value="P:pantothenate biosynthetic process"/>
    <property type="evidence" value="ECO:0007669"/>
    <property type="project" value="UniProtKB-UniRule"/>
</dbReference>
<dbReference type="CDD" id="cd06919">
    <property type="entry name" value="Asp_decarbox"/>
    <property type="match status" value="1"/>
</dbReference>
<dbReference type="Gene3D" id="2.40.40.20">
    <property type="match status" value="1"/>
</dbReference>
<dbReference type="HAMAP" id="MF_00446">
    <property type="entry name" value="PanD"/>
    <property type="match status" value="1"/>
</dbReference>
<dbReference type="InterPro" id="IPR009010">
    <property type="entry name" value="Asp_de-COase-like_dom_sf"/>
</dbReference>
<dbReference type="InterPro" id="IPR003190">
    <property type="entry name" value="Asp_decarbox"/>
</dbReference>
<dbReference type="NCBIfam" id="TIGR00223">
    <property type="entry name" value="panD"/>
    <property type="match status" value="1"/>
</dbReference>
<dbReference type="PANTHER" id="PTHR21012">
    <property type="entry name" value="ASPARTATE 1-DECARBOXYLASE"/>
    <property type="match status" value="1"/>
</dbReference>
<dbReference type="PANTHER" id="PTHR21012:SF0">
    <property type="entry name" value="ASPARTATE 1-DECARBOXYLASE"/>
    <property type="match status" value="1"/>
</dbReference>
<dbReference type="Pfam" id="PF02261">
    <property type="entry name" value="Asp_decarbox"/>
    <property type="match status" value="1"/>
</dbReference>
<dbReference type="PIRSF" id="PIRSF006246">
    <property type="entry name" value="Asp_decarbox"/>
    <property type="match status" value="1"/>
</dbReference>
<dbReference type="SUPFAM" id="SSF50692">
    <property type="entry name" value="ADC-like"/>
    <property type="match status" value="1"/>
</dbReference>
<reference key="1">
    <citation type="journal article" date="2011" name="J. Bacteriol.">
        <title>Genome sequence of lineage III Listeria monocytogenes strain HCC23.</title>
        <authorList>
            <person name="Steele C.L."/>
            <person name="Donaldson J.R."/>
            <person name="Paul D."/>
            <person name="Banes M.M."/>
            <person name="Arick T."/>
            <person name="Bridges S.M."/>
            <person name="Lawrence M.L."/>
        </authorList>
    </citation>
    <scope>NUCLEOTIDE SEQUENCE [LARGE SCALE GENOMIC DNA]</scope>
    <source>
        <strain>HCC23</strain>
    </source>
</reference>
<organism>
    <name type="scientific">Listeria monocytogenes serotype 4a (strain HCC23)</name>
    <dbReference type="NCBI Taxonomy" id="552536"/>
    <lineage>
        <taxon>Bacteria</taxon>
        <taxon>Bacillati</taxon>
        <taxon>Bacillota</taxon>
        <taxon>Bacilli</taxon>
        <taxon>Bacillales</taxon>
        <taxon>Listeriaceae</taxon>
        <taxon>Listeria</taxon>
    </lineage>
</organism>
<gene>
    <name evidence="1" type="primary">panD</name>
    <name type="ordered locus">LMHCC_0657</name>
</gene>